<organismHost>
    <name type="scientific">Canis lupus familiaris</name>
    <name type="common">Dog</name>
    <name type="synonym">Canis familiaris</name>
    <dbReference type="NCBI Taxonomy" id="9615"/>
</organismHost>
<organismHost>
    <name type="scientific">Homo sapiens</name>
    <name type="common">Human</name>
    <dbReference type="NCBI Taxonomy" id="9606"/>
</organismHost>
<organismHost>
    <name type="scientific">Macaca fascicularis</name>
    <name type="common">Crab-eating macaque</name>
    <name type="synonym">Cynomolgus monkey</name>
    <dbReference type="NCBI Taxonomy" id="9541"/>
</organismHost>
<organismHost>
    <name type="scientific">Macaca mulatta</name>
    <name type="common">Rhesus macaque</name>
    <dbReference type="NCBI Taxonomy" id="9544"/>
</organismHost>
<proteinExistence type="inferred from homology"/>
<dbReference type="EC" id="3.2.1.18" evidence="3"/>
<dbReference type="PIR" id="JQ1306">
    <property type="entry name" value="HNNZC2"/>
</dbReference>
<dbReference type="SMR" id="P28884"/>
<dbReference type="CAZy" id="GH83">
    <property type="family name" value="Glycoside Hydrolase Family 83"/>
</dbReference>
<dbReference type="GlyCosmos" id="P28884">
    <property type="glycosylation" value="4 sites, No reported glycans"/>
</dbReference>
<dbReference type="GO" id="GO:0020002">
    <property type="term" value="C:host cell plasma membrane"/>
    <property type="evidence" value="ECO:0007669"/>
    <property type="project" value="UniProtKB-SubCell"/>
</dbReference>
<dbReference type="GO" id="GO:0016020">
    <property type="term" value="C:membrane"/>
    <property type="evidence" value="ECO:0007669"/>
    <property type="project" value="UniProtKB-KW"/>
</dbReference>
<dbReference type="GO" id="GO:0019031">
    <property type="term" value="C:viral envelope"/>
    <property type="evidence" value="ECO:0007669"/>
    <property type="project" value="UniProtKB-KW"/>
</dbReference>
<dbReference type="GO" id="GO:0055036">
    <property type="term" value="C:virion membrane"/>
    <property type="evidence" value="ECO:0007669"/>
    <property type="project" value="UniProtKB-SubCell"/>
</dbReference>
<dbReference type="GO" id="GO:0004308">
    <property type="term" value="F:exo-alpha-sialidase activity"/>
    <property type="evidence" value="ECO:0007669"/>
    <property type="project" value="UniProtKB-EC"/>
</dbReference>
<dbReference type="GO" id="GO:0046789">
    <property type="term" value="F:host cell surface receptor binding"/>
    <property type="evidence" value="ECO:0007669"/>
    <property type="project" value="InterPro"/>
</dbReference>
<dbReference type="GO" id="GO:0046718">
    <property type="term" value="P:symbiont entry into host cell"/>
    <property type="evidence" value="ECO:0007669"/>
    <property type="project" value="UniProtKB-KW"/>
</dbReference>
<dbReference type="GO" id="GO:0019062">
    <property type="term" value="P:virion attachment to host cell"/>
    <property type="evidence" value="ECO:0007669"/>
    <property type="project" value="UniProtKB-KW"/>
</dbReference>
<dbReference type="CDD" id="cd15469">
    <property type="entry name" value="HN"/>
    <property type="match status" value="1"/>
</dbReference>
<dbReference type="FunFam" id="2.120.10.10:FF:000004">
    <property type="entry name" value="Hemagglutinin-neuraminidase"/>
    <property type="match status" value="1"/>
</dbReference>
<dbReference type="Gene3D" id="1.20.5.110">
    <property type="match status" value="1"/>
</dbReference>
<dbReference type="Gene3D" id="2.120.10.10">
    <property type="match status" value="1"/>
</dbReference>
<dbReference type="InterPro" id="IPR016285">
    <property type="entry name" value="Hemagglutn-neuramid"/>
</dbReference>
<dbReference type="InterPro" id="IPR000665">
    <property type="entry name" value="Hemagglutn/HN"/>
</dbReference>
<dbReference type="InterPro" id="IPR036278">
    <property type="entry name" value="Sialidase_sf"/>
</dbReference>
<dbReference type="Pfam" id="PF00423">
    <property type="entry name" value="HN"/>
    <property type="match status" value="1"/>
</dbReference>
<dbReference type="PIRSF" id="PIRSF001072">
    <property type="entry name" value="Hemagglut-neuramid_paramyxoV"/>
    <property type="match status" value="1"/>
</dbReference>
<dbReference type="SUPFAM" id="SSF50939">
    <property type="entry name" value="Sialidases"/>
    <property type="match status" value="1"/>
</dbReference>
<comment type="function">
    <text evidence="1">Attaches the virus to sialic acid-containing cell receptors and thereby initiating infection. Binding of HN protein to the receptor induces a conformational change that allows the F protein to trigger virion/cell membranes fusion (By similarity).</text>
</comment>
<comment type="function">
    <text evidence="1">Neuraminidase activity ensures the efficient spread of the virus by dissociating the mature virions from the neuraminic acid containing glycoproteins.</text>
</comment>
<comment type="catalytic activity">
    <reaction evidence="3">
        <text>Hydrolysis of alpha-(2-&gt;3)-, alpha-(2-&gt;6)-, alpha-(2-&gt;8)- glycosidic linkages of terminal sialic acid residues in oligosaccharides, glycoproteins, glycolipids, colominic acid and synthetic substrates.</text>
        <dbReference type="EC" id="3.2.1.18"/>
    </reaction>
</comment>
<comment type="subunit">
    <text evidence="2 5">Homotetramer; composed of disulfide-linked homodimers (By similarity). Interacts with F protein trimer (By similarity).</text>
</comment>
<comment type="subcellular location">
    <subcellularLocation>
        <location evidence="7">Virion membrane</location>
        <topology evidence="7">Single-pass type II membrane protein</topology>
    </subcellularLocation>
    <subcellularLocation>
        <location evidence="7">Host cell membrane</location>
        <topology evidence="7">Single-pass type II membrane protein</topology>
    </subcellularLocation>
</comment>
<comment type="domain">
    <text evidence="5">The C-terminus (head domain) is involved in binding the cellular receptor.</text>
</comment>
<comment type="similarity">
    <text evidence="7">Belongs to the paramyxoviruses hemagglutinin-neuraminidase family.</text>
</comment>
<accession>P28884</accession>
<sequence length="565" mass="62307">MVAEDAPVRGTCRVLFRTTTLIFLCTLLALSISILYESLIIRKQIMSQAGSTGSNFRLGSITDLLNNILSVANQIIYNSAVALPLQLDTLESTLLTAIKSLQTSDKLEQNCSWGAALINDNRYINGINQFYFSIAEGRNLTLGPLLNIPSFIPTATTPEGCTRIPSFSLTKTHWCYTHNVILNGCQDHVSSNQFVSMGIIEPTSAGFPSFRTLKTLYLSDGVNRKSCSISTVPGGCMMYCFVSTQPERDDYLSTAPPEQRIIIMYYNDTIVERIINPPGVLDVWATLNPGTGSGVYYLGWVLFPTYGGVIKDTSLWNNQANKYFIPQMVAALCSQNQATQVQNAKSSYYSSWFGNRMIQSGILACPLQQDLTNECLILPFSNDQVLMGAEGRLYMYGDSVYYYQRSNSWWPMTMLYKVTITFTNGQPSAISAQNVPTQQVPRPGTGDCSATNRCPGFCLKGVYADAWLLTNPSSTSTFGSEATFTGSYLNAATQRINPTMYIANNTQIISSQQFGSSGQEAAYGHTTCFRDTGSVMVYCIYIIELSSSLLGQFQIVPFIRQVTLS</sequence>
<feature type="chain" id="PRO_0000142643" description="Hemagglutinin-neuraminidase">
    <location>
        <begin position="1"/>
        <end position="565"/>
    </location>
</feature>
<feature type="topological domain" description="Intravirion" evidence="6">
    <location>
        <begin position="1"/>
        <end position="20"/>
    </location>
</feature>
<feature type="transmembrane region" description="Helical" evidence="6">
    <location>
        <begin position="21"/>
        <end position="41"/>
    </location>
</feature>
<feature type="topological domain" description="Virion surface" evidence="6">
    <location>
        <begin position="42"/>
        <end position="565"/>
    </location>
</feature>
<feature type="region of interest" description="Involved in neuraminidase activity" evidence="4">
    <location>
        <begin position="223"/>
        <end position="228"/>
    </location>
</feature>
<feature type="glycosylation site" description="N-linked (GlcNAc...) asparagine; by host" evidence="6">
    <location>
        <position position="110"/>
    </location>
</feature>
<feature type="glycosylation site" description="N-linked (GlcNAc...) asparagine; by host" evidence="6">
    <location>
        <position position="139"/>
    </location>
</feature>
<feature type="glycosylation site" description="N-linked (GlcNAc...) asparagine; by host" evidence="6">
    <location>
        <position position="267"/>
    </location>
</feature>
<feature type="glycosylation site" description="N-linked (GlcNAc...) asparagine; by host" evidence="6">
    <location>
        <position position="504"/>
    </location>
</feature>
<feature type="disulfide bond" evidence="5">
    <location>
        <begin position="161"/>
        <end position="185"/>
    </location>
</feature>
<feature type="disulfide bond" evidence="5">
    <location>
        <begin position="175"/>
        <end position="236"/>
    </location>
</feature>
<feature type="disulfide bond" evidence="5">
    <location>
        <begin position="227"/>
        <end position="240"/>
    </location>
</feature>
<feature type="disulfide bond" evidence="5">
    <location>
        <begin position="333"/>
        <end position="454"/>
    </location>
</feature>
<feature type="disulfide bond" evidence="5">
    <location>
        <begin position="365"/>
        <end position="375"/>
    </location>
</feature>
<feature type="disulfide bond" evidence="5">
    <location>
        <begin position="448"/>
        <end position="458"/>
    </location>
</feature>
<feature type="disulfide bond" evidence="5">
    <location>
        <begin position="528"/>
        <end position="539"/>
    </location>
</feature>
<gene>
    <name type="primary">HN</name>
</gene>
<evidence type="ECO:0000250" key="1"/>
<evidence type="ECO:0000250" key="2">
    <source>
        <dbReference type="UniProtKB" id="P04853"/>
    </source>
</evidence>
<evidence type="ECO:0000250" key="3">
    <source>
        <dbReference type="UniProtKB" id="P25465"/>
    </source>
</evidence>
<evidence type="ECO:0000250" key="4">
    <source>
        <dbReference type="UniProtKB" id="Q91UL0"/>
    </source>
</evidence>
<evidence type="ECO:0000250" key="5">
    <source>
        <dbReference type="UniProtKB" id="Q9WAF5"/>
    </source>
</evidence>
<evidence type="ECO:0000255" key="6"/>
<evidence type="ECO:0000305" key="7"/>
<reference key="1">
    <citation type="journal article" date="1991" name="J. Gen. Virol.">
        <title>Sequence comparison between the haemagglutinin-neuraminidase genes of simian, canine and human isolates of simian virus 5.</title>
        <authorList>
            <person name="Baty D.U."/>
            <person name="Southern J.A."/>
            <person name="Randall R.E."/>
        </authorList>
    </citation>
    <scope>NUCLEOTIDE SEQUENCE</scope>
</reference>
<keyword id="KW-1015">Disulfide bond</keyword>
<keyword id="KW-0325">Glycoprotein</keyword>
<keyword id="KW-0348">Hemagglutinin</keyword>
<keyword id="KW-1032">Host cell membrane</keyword>
<keyword id="KW-1043">Host membrane</keyword>
<keyword id="KW-0945">Host-virus interaction</keyword>
<keyword id="KW-0378">Hydrolase</keyword>
<keyword id="KW-0472">Membrane</keyword>
<keyword id="KW-0735">Signal-anchor</keyword>
<keyword id="KW-0812">Transmembrane</keyword>
<keyword id="KW-1133">Transmembrane helix</keyword>
<keyword id="KW-1161">Viral attachment to host cell</keyword>
<keyword id="KW-0261">Viral envelope protein</keyword>
<keyword id="KW-0946">Virion</keyword>
<keyword id="KW-1160">Virus entry into host cell</keyword>
<name>HN_PIV5D</name>
<protein>
    <recommendedName>
        <fullName>Hemagglutinin-neuraminidase</fullName>
        <ecNumber evidence="3">3.2.1.18</ecNumber>
    </recommendedName>
</protein>
<organism>
    <name type="scientific">Parainfluenza virus 5 (isolate Canine/CPI+)</name>
    <name type="common">PIV5</name>
    <name type="synonym">Simian virus 5</name>
    <dbReference type="NCBI Taxonomy" id="31608"/>
    <lineage>
        <taxon>Viruses</taxon>
        <taxon>Riboviria</taxon>
        <taxon>Orthornavirae</taxon>
        <taxon>Negarnaviricota</taxon>
        <taxon>Haploviricotina</taxon>
        <taxon>Monjiviricetes</taxon>
        <taxon>Mononegavirales</taxon>
        <taxon>Paramyxoviridae</taxon>
        <taxon>Rubulavirinae</taxon>
        <taxon>Orthorubulavirus</taxon>
        <taxon>Orthorubulavirus mammalis</taxon>
        <taxon>Mammalian orthorubulavirus 5</taxon>
    </lineage>
</organism>